<name>CHS3_EXODN</name>
<protein>
    <recommendedName>
        <fullName evidence="8">Chitin synthase 3</fullName>
        <ecNumber evidence="6">2.4.1.16</ecNumber>
    </recommendedName>
    <alternativeName>
        <fullName evidence="9">Chitin-UDP acetyl-glucosaminyl transferase 3</fullName>
    </alternativeName>
    <alternativeName>
        <fullName evidence="8">Class-III chitin synthase 3</fullName>
    </alternativeName>
</protein>
<evidence type="ECO:0000255" key="1"/>
<evidence type="ECO:0000255" key="2">
    <source>
        <dbReference type="PROSITE-ProRule" id="PRU00498"/>
    </source>
</evidence>
<evidence type="ECO:0000256" key="3">
    <source>
        <dbReference type="SAM" id="MobiDB-lite"/>
    </source>
</evidence>
<evidence type="ECO:0000269" key="4">
    <source>
    </source>
</evidence>
<evidence type="ECO:0000269" key="5">
    <source>
    </source>
</evidence>
<evidence type="ECO:0000269" key="6">
    <source>
    </source>
</evidence>
<evidence type="ECO:0000269" key="7">
    <source>
    </source>
</evidence>
<evidence type="ECO:0000303" key="8">
    <source>
    </source>
</evidence>
<evidence type="ECO:0000305" key="9"/>
<comment type="function">
    <text evidence="4 5 6">Polymerizes chitin, a structural polymer of the cell wall and septum, by transferring the sugar moiety of UDP-GlcNAc to the non-reducing end of the growing chitin polymer (PubMed:12146758). Is not only stable at different pH, but is also able to tolerate a broad temperature range (PubMed:12146758). With CHS2, plays an important role in virulence (PubMed:10648509, PubMed:11705928).</text>
</comment>
<comment type="catalytic activity">
    <reaction evidence="6">
        <text>[(1-&gt;4)-N-acetyl-beta-D-glucosaminyl](n) + UDP-N-acetyl-alpha-D-glucosamine = [(1-&gt;4)-N-acetyl-beta-D-glucosaminyl](n+1) + UDP + H(+)</text>
        <dbReference type="Rhea" id="RHEA:16637"/>
        <dbReference type="Rhea" id="RHEA-COMP:9593"/>
        <dbReference type="Rhea" id="RHEA-COMP:9595"/>
        <dbReference type="ChEBI" id="CHEBI:15378"/>
        <dbReference type="ChEBI" id="CHEBI:17029"/>
        <dbReference type="ChEBI" id="CHEBI:57705"/>
        <dbReference type="ChEBI" id="CHEBI:58223"/>
        <dbReference type="EC" id="2.4.1.16"/>
    </reaction>
    <physiologicalReaction direction="left-to-right" evidence="6">
        <dbReference type="Rhea" id="RHEA:16638"/>
    </physiologicalReaction>
</comment>
<comment type="biophysicochemical properties">
    <phDependence>
        <text evidence="6">Optimum pH is 6.0 to 10.0.</text>
    </phDependence>
    <temperatureDependence>
        <text evidence="6">Optimum temperature is 25 degrees Celsius to 50 degrees Celsius.</text>
    </temperatureDependence>
</comment>
<comment type="subcellular location">
    <subcellularLocation>
        <location evidence="9">Cell membrane</location>
        <topology evidence="1">Multi-pass membrane protein</topology>
    </subcellularLocation>
</comment>
<comment type="induction">
    <text evidence="4 5 7">Highly expressed under stress conditions, such as the shift of cells to temperatures commensurate with infection, or to conditions that induce cellular morphogenesis in this fungus (PubMed:11705928, PubMed:12213927). The promoter contains a negative regulatory element between -1600 and -780 bp (PubMed:10648509).</text>
</comment>
<comment type="disruption phenotype">
    <text evidence="4 5 7">Results in significantly reduced chitin synthase activities but does not obviously affect cell morphology, growth rates, chitin contents, or virulence (PubMed:10648509). If it does not affect virulence when solely disrupted, the virulence is drastically reduced in a mouse model of acute infection in a doucble CHS2-CHS3 disruptant (PubMed:11705928). Leads to increased expression of the other chitin synthase genes for compensation (PubMed:12213927).</text>
</comment>
<comment type="similarity">
    <text evidence="9">Belongs to the chitin synthase family. Class III subfamily.</text>
</comment>
<accession>H6C4I7</accession>
<gene>
    <name evidence="8" type="primary">CHS3</name>
    <name type="ORF">HMPREF1120_06479</name>
</gene>
<reference key="1">
    <citation type="submission" date="2011-07" db="EMBL/GenBank/DDBJ databases">
        <title>The Genome Sequence of Exophiala (Wangiella) dermatitidis NIH/UT8656.</title>
        <authorList>
            <consortium name="The Broad Institute Genome Sequencing Platform"/>
            <person name="Cuomo C."/>
            <person name="Wang Z."/>
            <person name="Hunicke-Smith S."/>
            <person name="Szanislo P.J."/>
            <person name="Earl A."/>
            <person name="Young S.K."/>
            <person name="Zeng Q."/>
            <person name="Gargeya S."/>
            <person name="Fitzgerald M."/>
            <person name="Haas B."/>
            <person name="Abouelleil A."/>
            <person name="Alvarado L."/>
            <person name="Arachchi H.M."/>
            <person name="Berlin A."/>
            <person name="Brown A."/>
            <person name="Chapman S.B."/>
            <person name="Chen Z."/>
            <person name="Dunbar C."/>
            <person name="Freedman E."/>
            <person name="Gearin G."/>
            <person name="Gellesch M."/>
            <person name="Goldberg J."/>
            <person name="Griggs A."/>
            <person name="Gujja S."/>
            <person name="Heiman D."/>
            <person name="Howarth C."/>
            <person name="Larson L."/>
            <person name="Lui A."/>
            <person name="MacDonald P.J.P."/>
            <person name="Montmayeur A."/>
            <person name="Murphy C."/>
            <person name="Neiman D."/>
            <person name="Pearson M."/>
            <person name="Priest M."/>
            <person name="Roberts A."/>
            <person name="Saif S."/>
            <person name="Shea T."/>
            <person name="Shenoy N."/>
            <person name="Sisk P."/>
            <person name="Stolte C."/>
            <person name="Sykes S."/>
            <person name="Wortman J."/>
            <person name="Nusbaum C."/>
            <person name="Birren B."/>
        </authorList>
    </citation>
    <scope>NUCLEOTIDE SEQUENCE [LARGE SCALE GENOMIC DNA]</scope>
    <source>
        <strain>ATCC 34100 / CBS 525.76 / NIH/UT8656</strain>
    </source>
</reference>
<reference key="2">
    <citation type="journal article" date="2000" name="J. Bacteriol.">
        <title>WdCHS3, a gene that encodes a class III chitin synthase in Wangiella (Exophiala) dermatitidis, is expressed differentially under stress conditions.</title>
        <authorList>
            <person name="Wang Z."/>
            <person name="Szaniszlo P.J."/>
        </authorList>
    </citation>
    <scope>FUNCTION</scope>
    <scope>INDUCTION</scope>
    <scope>DISRUPTION PHENOTYPE</scope>
</reference>
<reference key="3">
    <citation type="journal article" date="2001" name="Infect. Immun.">
        <title>WdChs2p, a class I chitin synthase, together with WdChs3p (class III) contributes to virulence in Wangiella (Exophiala) dermatitidis.</title>
        <authorList>
            <person name="Wang Z."/>
            <person name="Zheng L."/>
            <person name="Liu H."/>
            <person name="Wang Q."/>
            <person name="Hauser M."/>
            <person name="Kauffman S."/>
            <person name="Becker J.M."/>
            <person name="Szaniszlo P.J."/>
        </authorList>
    </citation>
    <scope>FUNCTION</scope>
    <scope>DISRUPTION PHENOTYPE</scope>
</reference>
<reference key="4">
    <citation type="journal article" date="2002" name="Med. Mycol.">
        <title>Characterization of WdChs3p, a class III chitin synthase, of Wangiella (Exophiala) dermatitidis, overexpressed in Saccharomyces cerevisiae.</title>
        <authorList>
            <person name="Wang Z."/>
            <person name="Szaniszlo P.J."/>
        </authorList>
    </citation>
    <scope>FUNCTION</scope>
    <scope>CATALYTIC ACTIVITY</scope>
</reference>
<reference key="5">
    <citation type="journal article" date="2002" name="Microbiology">
        <title>Compensatory expression of five chitin synthase genes, a response to stress stimuli, in Wangiella (Exophiala) dermatitidis, a melanized fungal pathogen of humans.</title>
        <authorList>
            <person name="Wang Q."/>
            <person name="Liu H."/>
            <person name="Szaniszlo P.J."/>
        </authorList>
    </citation>
    <scope>INDUCTION</scope>
    <scope>DISRUPTION PHENOTYPE</scope>
</reference>
<organism>
    <name type="scientific">Exophiala dermatitidis (strain ATCC 34100 / CBS 525.76 / NIH/UT8656)</name>
    <name type="common">Black yeast</name>
    <name type="synonym">Wangiella dermatitidis</name>
    <dbReference type="NCBI Taxonomy" id="858893"/>
    <lineage>
        <taxon>Eukaryota</taxon>
        <taxon>Fungi</taxon>
        <taxon>Dikarya</taxon>
        <taxon>Ascomycota</taxon>
        <taxon>Pezizomycotina</taxon>
        <taxon>Eurotiomycetes</taxon>
        <taxon>Chaetothyriomycetidae</taxon>
        <taxon>Chaetothyriales</taxon>
        <taxon>Herpotrichiellaceae</taxon>
        <taxon>Exophiala</taxon>
    </lineage>
</organism>
<sequence length="865" mass="97209">MASQYPGHQLDDIPSTNVYRPPPRHEDDEAEHALLHQNSAYQSQYDDPHSRPLTPGQESVYTLNESYVGGDPSKVPVTSYNPQYTQPYGQGYGMNNSRPGFPTPGPPDPIDRTDSTEAWRERQAPGFGTIKRYATRKVKLVQGSVLSIDYPVPSAIQNAIQAKYRNDLEGGSEEFTHMRYTAATCDPDDFTLKNGYNLRPAMYNRHTELLIAITYYNEDKVLTARTLHGVMQNIRDIVNLKKSEFWNKGGPAWQKIVVCLVFDGIDPCDKNTLDVLATIGVYQDGVMKKDVDGKETVAHIFEYTTQLSVTANQQLIRPNDNDATSLPPAQMIFCLKQKNSKKINSHRWLFNAFGRILNPEVCILLDAGTKPGSKSLMALWQAFYNDKDLGGACGEIHAMLGPGGVFGRKLLNPLVAAQNFEYKISNILDKPLESSFGYVSVLPGAFSAYRFRAIMGRPLEQYFHGDHTLSKRLGKKGIEGMNIFKKNMFLAEDRILCFELVAKAGSKWHLSYVKASKAETDVPEGAPEFIGQRRRWLNGSFAASIYSLMHFSRMYKSGHNLIRMFFLHIQMIYNIVSVLLSWFSLASFWLTTKVLMDLVGQPSTSNDNSAFPFGNTATPIINTILQYLYLAFLLLQFILALGNRPKGSKVAYIISFCLFGLIQLYVIVLSMYLVVRAFTTKNGTDIVTNEGANEFVKSFFASTGPGIVIIALAATFGLYFVASFLYMDPWHMFTSFAQYLLLMPSFINILMIYAFSNWHDVSWGTKGSDKADVLPSAQTKKDEKSKTAVVEEVDKPQADIDSQFEATVRRALAPYKPPEEKEEKTLEDSYKNFRTRLVATWIFSNALLAVAITSDSLDRFGFTVR</sequence>
<dbReference type="EC" id="2.4.1.16" evidence="6"/>
<dbReference type="EMBL" id="JH226134">
    <property type="protein sequence ID" value="EHY58469.1"/>
    <property type="molecule type" value="Genomic_DNA"/>
</dbReference>
<dbReference type="RefSeq" id="XP_009158930.1">
    <property type="nucleotide sequence ID" value="XM_009160682.1"/>
</dbReference>
<dbReference type="SMR" id="H6C4I7"/>
<dbReference type="STRING" id="858893.H6C4I7"/>
<dbReference type="GeneID" id="20311118"/>
<dbReference type="VEuPathDB" id="FungiDB:HMPREF1120_06479"/>
<dbReference type="eggNOG" id="KOG2571">
    <property type="taxonomic scope" value="Eukaryota"/>
</dbReference>
<dbReference type="HOGENOM" id="CLU_004760_0_1_1"/>
<dbReference type="InParanoid" id="H6C4I7"/>
<dbReference type="OMA" id="WHLTYIK"/>
<dbReference type="OrthoDB" id="5178at5583"/>
<dbReference type="Proteomes" id="UP000007304">
    <property type="component" value="Unassembled WGS sequence"/>
</dbReference>
<dbReference type="GO" id="GO:0030428">
    <property type="term" value="C:cell septum"/>
    <property type="evidence" value="ECO:0007669"/>
    <property type="project" value="TreeGrafter"/>
</dbReference>
<dbReference type="GO" id="GO:0005886">
    <property type="term" value="C:plasma membrane"/>
    <property type="evidence" value="ECO:0007669"/>
    <property type="project" value="UniProtKB-SubCell"/>
</dbReference>
<dbReference type="GO" id="GO:0004100">
    <property type="term" value="F:chitin synthase activity"/>
    <property type="evidence" value="ECO:0007669"/>
    <property type="project" value="UniProtKB-EC"/>
</dbReference>
<dbReference type="GO" id="GO:0071555">
    <property type="term" value="P:cell wall organization"/>
    <property type="evidence" value="ECO:0007669"/>
    <property type="project" value="UniProtKB-KW"/>
</dbReference>
<dbReference type="GO" id="GO:0006031">
    <property type="term" value="P:chitin biosynthetic process"/>
    <property type="evidence" value="ECO:0007669"/>
    <property type="project" value="InterPro"/>
</dbReference>
<dbReference type="CDD" id="cd04190">
    <property type="entry name" value="Chitin_synth_C"/>
    <property type="match status" value="1"/>
</dbReference>
<dbReference type="InterPro" id="IPR004835">
    <property type="entry name" value="Chitin_synth"/>
</dbReference>
<dbReference type="InterPro" id="IPR004834">
    <property type="entry name" value="Chitin_synth_fun"/>
</dbReference>
<dbReference type="InterPro" id="IPR013616">
    <property type="entry name" value="Chitin_synth_N"/>
</dbReference>
<dbReference type="InterPro" id="IPR029044">
    <property type="entry name" value="Nucleotide-diphossugar_trans"/>
</dbReference>
<dbReference type="PANTHER" id="PTHR22914">
    <property type="entry name" value="CHITIN SYNTHASE"/>
    <property type="match status" value="1"/>
</dbReference>
<dbReference type="PANTHER" id="PTHR22914:SF11">
    <property type="entry name" value="CHITIN SYNTHASE B"/>
    <property type="match status" value="1"/>
</dbReference>
<dbReference type="Pfam" id="PF01644">
    <property type="entry name" value="Chitin_synth_1"/>
    <property type="match status" value="1"/>
</dbReference>
<dbReference type="Pfam" id="PF08407">
    <property type="entry name" value="Chitin_synth_1N"/>
    <property type="match status" value="1"/>
</dbReference>
<dbReference type="SUPFAM" id="SSF53448">
    <property type="entry name" value="Nucleotide-diphospho-sugar transferases"/>
    <property type="match status" value="1"/>
</dbReference>
<feature type="chain" id="PRO_0000460787" description="Chitin synthase 3">
    <location>
        <begin position="1"/>
        <end position="865"/>
    </location>
</feature>
<feature type="transmembrane region" description="Helical" evidence="1">
    <location>
        <begin position="565"/>
        <end position="585"/>
    </location>
</feature>
<feature type="transmembrane region" description="Helical" evidence="1">
    <location>
        <begin position="620"/>
        <end position="640"/>
    </location>
</feature>
<feature type="transmembrane region" description="Helical" evidence="1">
    <location>
        <begin position="650"/>
        <end position="670"/>
    </location>
</feature>
<feature type="transmembrane region" description="Helical" evidence="1">
    <location>
        <begin position="707"/>
        <end position="727"/>
    </location>
</feature>
<feature type="transmembrane region" description="Helical" evidence="1">
    <location>
        <begin position="735"/>
        <end position="755"/>
    </location>
</feature>
<feature type="transmembrane region" description="Helical" evidence="1">
    <location>
        <begin position="837"/>
        <end position="857"/>
    </location>
</feature>
<feature type="region of interest" description="Disordered" evidence="3">
    <location>
        <begin position="1"/>
        <end position="59"/>
    </location>
</feature>
<feature type="compositionally biased region" description="Basic and acidic residues" evidence="3">
    <location>
        <begin position="23"/>
        <end position="34"/>
    </location>
</feature>
<feature type="compositionally biased region" description="Polar residues" evidence="3">
    <location>
        <begin position="36"/>
        <end position="45"/>
    </location>
</feature>
<feature type="glycosylation site" description="N-linked (GlcNAc...) asparagine" evidence="2">
    <location>
        <position position="64"/>
    </location>
</feature>
<feature type="glycosylation site" description="N-linked (GlcNAc...) asparagine" evidence="2">
    <location>
        <position position="95"/>
    </location>
</feature>
<feature type="glycosylation site" description="N-linked (GlcNAc...) asparagine" evidence="2">
    <location>
        <position position="538"/>
    </location>
</feature>
<feature type="glycosylation site" description="N-linked (GlcNAc...) asparagine" evidence="2">
    <location>
        <position position="682"/>
    </location>
</feature>
<proteinExistence type="evidence at protein level"/>
<keyword id="KW-1003">Cell membrane</keyword>
<keyword id="KW-0961">Cell wall biogenesis/degradation</keyword>
<keyword id="KW-0325">Glycoprotein</keyword>
<keyword id="KW-0328">Glycosyltransferase</keyword>
<keyword id="KW-0472">Membrane</keyword>
<keyword id="KW-1185">Reference proteome</keyword>
<keyword id="KW-0808">Transferase</keyword>
<keyword id="KW-0812">Transmembrane</keyword>
<keyword id="KW-1133">Transmembrane helix</keyword>